<accession>Q1RGX3</accession>
<name>YBEY_RICBR</name>
<organism>
    <name type="scientific">Rickettsia bellii (strain RML369-C)</name>
    <dbReference type="NCBI Taxonomy" id="336407"/>
    <lineage>
        <taxon>Bacteria</taxon>
        <taxon>Pseudomonadati</taxon>
        <taxon>Pseudomonadota</taxon>
        <taxon>Alphaproteobacteria</taxon>
        <taxon>Rickettsiales</taxon>
        <taxon>Rickettsiaceae</taxon>
        <taxon>Rickettsieae</taxon>
        <taxon>Rickettsia</taxon>
        <taxon>belli group</taxon>
    </lineage>
</organism>
<protein>
    <recommendedName>
        <fullName evidence="1">Endoribonuclease YbeY</fullName>
        <ecNumber evidence="1">3.1.-.-</ecNumber>
    </recommendedName>
</protein>
<sequence length="183" mass="21475">MINVEIIKNYSKWREHKQINKALIKKITQKTLSQFDNFSEIKQFELSILLTNNEEILTLNKQFRNIEKATNVLSFPANELNWQDLRFSGNEIASSNKPIILENLGDSDYMHLGDIAFCHDVIYNESYEQQKTFENHFIHLLIHSILHLIGFDHQNDTETKIMENLEIEILAHFGISSPYLLIK</sequence>
<reference key="1">
    <citation type="journal article" date="2006" name="PLoS Genet.">
        <title>Genome sequence of Rickettsia bellii illuminates the role of amoebae in gene exchanges between intracellular pathogens.</title>
        <authorList>
            <person name="Ogata H."/>
            <person name="La Scola B."/>
            <person name="Audic S."/>
            <person name="Renesto P."/>
            <person name="Blanc G."/>
            <person name="Robert C."/>
            <person name="Fournier P.-E."/>
            <person name="Claverie J.-M."/>
            <person name="Raoult D."/>
        </authorList>
    </citation>
    <scope>NUCLEOTIDE SEQUENCE [LARGE SCALE GENOMIC DNA]</scope>
    <source>
        <strain>RML369-C</strain>
    </source>
</reference>
<dbReference type="EC" id="3.1.-.-" evidence="1"/>
<dbReference type="EMBL" id="CP000087">
    <property type="protein sequence ID" value="ABE05391.1"/>
    <property type="molecule type" value="Genomic_DNA"/>
</dbReference>
<dbReference type="RefSeq" id="WP_011477961.1">
    <property type="nucleotide sequence ID" value="NC_007940.1"/>
</dbReference>
<dbReference type="SMR" id="Q1RGX3"/>
<dbReference type="KEGG" id="rbe:RBE_1310"/>
<dbReference type="eggNOG" id="COG0319">
    <property type="taxonomic scope" value="Bacteria"/>
</dbReference>
<dbReference type="HOGENOM" id="CLU_106710_0_0_5"/>
<dbReference type="OrthoDB" id="9807740at2"/>
<dbReference type="Proteomes" id="UP000001951">
    <property type="component" value="Chromosome"/>
</dbReference>
<dbReference type="GO" id="GO:0005737">
    <property type="term" value="C:cytoplasm"/>
    <property type="evidence" value="ECO:0007669"/>
    <property type="project" value="UniProtKB-SubCell"/>
</dbReference>
<dbReference type="GO" id="GO:0004222">
    <property type="term" value="F:metalloendopeptidase activity"/>
    <property type="evidence" value="ECO:0007669"/>
    <property type="project" value="InterPro"/>
</dbReference>
<dbReference type="GO" id="GO:0004521">
    <property type="term" value="F:RNA endonuclease activity"/>
    <property type="evidence" value="ECO:0007669"/>
    <property type="project" value="UniProtKB-UniRule"/>
</dbReference>
<dbReference type="GO" id="GO:0008270">
    <property type="term" value="F:zinc ion binding"/>
    <property type="evidence" value="ECO:0007669"/>
    <property type="project" value="UniProtKB-UniRule"/>
</dbReference>
<dbReference type="GO" id="GO:0006364">
    <property type="term" value="P:rRNA processing"/>
    <property type="evidence" value="ECO:0007669"/>
    <property type="project" value="UniProtKB-UniRule"/>
</dbReference>
<dbReference type="Gene3D" id="3.40.390.30">
    <property type="entry name" value="Metalloproteases ('zincins'), catalytic domain"/>
    <property type="match status" value="1"/>
</dbReference>
<dbReference type="HAMAP" id="MF_00009">
    <property type="entry name" value="Endoribonucl_YbeY"/>
    <property type="match status" value="1"/>
</dbReference>
<dbReference type="InterPro" id="IPR023091">
    <property type="entry name" value="MetalPrtase_cat_dom_sf_prd"/>
</dbReference>
<dbReference type="InterPro" id="IPR002036">
    <property type="entry name" value="YbeY"/>
</dbReference>
<dbReference type="InterPro" id="IPR020549">
    <property type="entry name" value="YbeY_CS"/>
</dbReference>
<dbReference type="NCBIfam" id="TIGR00043">
    <property type="entry name" value="rRNA maturation RNase YbeY"/>
    <property type="match status" value="1"/>
</dbReference>
<dbReference type="PANTHER" id="PTHR46986">
    <property type="entry name" value="ENDORIBONUCLEASE YBEY, CHLOROPLASTIC"/>
    <property type="match status" value="1"/>
</dbReference>
<dbReference type="PANTHER" id="PTHR46986:SF1">
    <property type="entry name" value="ENDORIBONUCLEASE YBEY, CHLOROPLASTIC"/>
    <property type="match status" value="1"/>
</dbReference>
<dbReference type="Pfam" id="PF02130">
    <property type="entry name" value="YbeY"/>
    <property type="match status" value="1"/>
</dbReference>
<dbReference type="SUPFAM" id="SSF55486">
    <property type="entry name" value="Metalloproteases ('zincins'), catalytic domain"/>
    <property type="match status" value="1"/>
</dbReference>
<dbReference type="PROSITE" id="PS01306">
    <property type="entry name" value="UPF0054"/>
    <property type="match status" value="1"/>
</dbReference>
<proteinExistence type="inferred from homology"/>
<feature type="chain" id="PRO_0000277991" description="Endoribonuclease YbeY">
    <location>
        <begin position="1"/>
        <end position="183"/>
    </location>
</feature>
<feature type="binding site" evidence="1">
    <location>
        <position position="143"/>
    </location>
    <ligand>
        <name>Zn(2+)</name>
        <dbReference type="ChEBI" id="CHEBI:29105"/>
        <note>catalytic</note>
    </ligand>
</feature>
<feature type="binding site" evidence="1">
    <location>
        <position position="147"/>
    </location>
    <ligand>
        <name>Zn(2+)</name>
        <dbReference type="ChEBI" id="CHEBI:29105"/>
        <note>catalytic</note>
    </ligand>
</feature>
<feature type="binding site" evidence="1">
    <location>
        <position position="153"/>
    </location>
    <ligand>
        <name>Zn(2+)</name>
        <dbReference type="ChEBI" id="CHEBI:29105"/>
        <note>catalytic</note>
    </ligand>
</feature>
<gene>
    <name evidence="1" type="primary">ybeY</name>
    <name type="ordered locus">RBE_1310</name>
</gene>
<keyword id="KW-0963">Cytoplasm</keyword>
<keyword id="KW-0255">Endonuclease</keyword>
<keyword id="KW-0378">Hydrolase</keyword>
<keyword id="KW-0479">Metal-binding</keyword>
<keyword id="KW-0540">Nuclease</keyword>
<keyword id="KW-0690">Ribosome biogenesis</keyword>
<keyword id="KW-0698">rRNA processing</keyword>
<keyword id="KW-0862">Zinc</keyword>
<comment type="function">
    <text evidence="1">Single strand-specific metallo-endoribonuclease involved in late-stage 70S ribosome quality control and in maturation of the 3' terminus of the 16S rRNA.</text>
</comment>
<comment type="cofactor">
    <cofactor evidence="1">
        <name>Zn(2+)</name>
        <dbReference type="ChEBI" id="CHEBI:29105"/>
    </cofactor>
    <text evidence="1">Binds 1 zinc ion.</text>
</comment>
<comment type="subcellular location">
    <subcellularLocation>
        <location evidence="1">Cytoplasm</location>
    </subcellularLocation>
</comment>
<comment type="similarity">
    <text evidence="1">Belongs to the endoribonuclease YbeY family.</text>
</comment>
<evidence type="ECO:0000255" key="1">
    <source>
        <dbReference type="HAMAP-Rule" id="MF_00009"/>
    </source>
</evidence>